<evidence type="ECO:0000255" key="1">
    <source>
        <dbReference type="HAMAP-Rule" id="MF_01864"/>
    </source>
</evidence>
<evidence type="ECO:0000255" key="2">
    <source>
        <dbReference type="PROSITE-ProRule" id="PRU01266"/>
    </source>
</evidence>
<keyword id="KW-0004">4Fe-4S</keyword>
<keyword id="KW-0963">Cytoplasm</keyword>
<keyword id="KW-0408">Iron</keyword>
<keyword id="KW-0411">Iron-sulfur</keyword>
<keyword id="KW-0479">Metal-binding</keyword>
<keyword id="KW-0949">S-adenosyl-L-methionine</keyword>
<keyword id="KW-0808">Transferase</keyword>
<keyword id="KW-0819">tRNA processing</keyword>
<accession>A4XL48</accession>
<organism>
    <name type="scientific">Caldicellulosiruptor saccharolyticus (strain ATCC 43494 / DSM 8903 / Tp8T 6331)</name>
    <dbReference type="NCBI Taxonomy" id="351627"/>
    <lineage>
        <taxon>Bacteria</taxon>
        <taxon>Bacillati</taxon>
        <taxon>Bacillota</taxon>
        <taxon>Bacillota incertae sedis</taxon>
        <taxon>Caldicellulosiruptorales</taxon>
        <taxon>Caldicellulosiruptoraceae</taxon>
        <taxon>Caldicellulosiruptor</taxon>
    </lineage>
</organism>
<comment type="function">
    <text evidence="1">Catalyzes the methylthiolation of N6-(dimethylallyl)adenosine (i(6)A), leading to the formation of 2-methylthio-N6-(dimethylallyl)adenosine (ms(2)i(6)A) at position 37 in tRNAs that read codons beginning with uridine.</text>
</comment>
<comment type="catalytic activity">
    <reaction evidence="1">
        <text>N(6)-dimethylallyladenosine(37) in tRNA + (sulfur carrier)-SH + AH2 + 2 S-adenosyl-L-methionine = 2-methylsulfanyl-N(6)-dimethylallyladenosine(37) in tRNA + (sulfur carrier)-H + 5'-deoxyadenosine + L-methionine + A + S-adenosyl-L-homocysteine + 2 H(+)</text>
        <dbReference type="Rhea" id="RHEA:37067"/>
        <dbReference type="Rhea" id="RHEA-COMP:10375"/>
        <dbReference type="Rhea" id="RHEA-COMP:10376"/>
        <dbReference type="Rhea" id="RHEA-COMP:14737"/>
        <dbReference type="Rhea" id="RHEA-COMP:14739"/>
        <dbReference type="ChEBI" id="CHEBI:13193"/>
        <dbReference type="ChEBI" id="CHEBI:15378"/>
        <dbReference type="ChEBI" id="CHEBI:17319"/>
        <dbReference type="ChEBI" id="CHEBI:17499"/>
        <dbReference type="ChEBI" id="CHEBI:29917"/>
        <dbReference type="ChEBI" id="CHEBI:57844"/>
        <dbReference type="ChEBI" id="CHEBI:57856"/>
        <dbReference type="ChEBI" id="CHEBI:59789"/>
        <dbReference type="ChEBI" id="CHEBI:64428"/>
        <dbReference type="ChEBI" id="CHEBI:74415"/>
        <dbReference type="ChEBI" id="CHEBI:74417"/>
        <dbReference type="EC" id="2.8.4.3"/>
    </reaction>
</comment>
<comment type="cofactor">
    <cofactor evidence="1">
        <name>[4Fe-4S] cluster</name>
        <dbReference type="ChEBI" id="CHEBI:49883"/>
    </cofactor>
    <text evidence="1">Binds 2 [4Fe-4S] clusters. One cluster is coordinated with 3 cysteines and an exchangeable S-adenosyl-L-methionine.</text>
</comment>
<comment type="subunit">
    <text evidence="1">Monomer.</text>
</comment>
<comment type="subcellular location">
    <subcellularLocation>
        <location evidence="1">Cytoplasm</location>
    </subcellularLocation>
</comment>
<comment type="similarity">
    <text evidence="1">Belongs to the methylthiotransferase family. MiaB subfamily.</text>
</comment>
<gene>
    <name evidence="1" type="primary">miaB</name>
    <name type="ordered locus">Csac_2048</name>
</gene>
<reference key="1">
    <citation type="submission" date="2007-04" db="EMBL/GenBank/DDBJ databases">
        <title>Genome sequence of the thermophilic hydrogen-producing bacterium Caldicellulosiruptor saccharolyticus DSM 8903.</title>
        <authorList>
            <person name="Copeland A."/>
            <person name="Lucas S."/>
            <person name="Lapidus A."/>
            <person name="Barry K."/>
            <person name="Detter J.C."/>
            <person name="Glavina del Rio T."/>
            <person name="Hammon N."/>
            <person name="Israni S."/>
            <person name="Dalin E."/>
            <person name="Tice H."/>
            <person name="Pitluck S."/>
            <person name="Kiss H."/>
            <person name="Brettin T."/>
            <person name="Bruce D."/>
            <person name="Han C."/>
            <person name="Schmutz J."/>
            <person name="Larimer F."/>
            <person name="Land M."/>
            <person name="Hauser L."/>
            <person name="Kyrpides N."/>
            <person name="Lykidis A."/>
            <person name="van de Werken H.J.G."/>
            <person name="Verhaart M.R.A."/>
            <person name="VanFossen A.L."/>
            <person name="Lewis D.L."/>
            <person name="Nichols J.D."/>
            <person name="Goorissen H.P."/>
            <person name="van Niel E.W.J."/>
            <person name="Stams F.J.M."/>
            <person name="Willquist K.U."/>
            <person name="Ward D.E."/>
            <person name="van der Oost J."/>
            <person name="Kelly R.M."/>
            <person name="Kengen S.M.W."/>
            <person name="Richardson P."/>
        </authorList>
    </citation>
    <scope>NUCLEOTIDE SEQUENCE [LARGE SCALE GENOMIC DNA]</scope>
    <source>
        <strain>ATCC 43494 / DSM 8903 / Tp8T 6331</strain>
    </source>
</reference>
<protein>
    <recommendedName>
        <fullName evidence="1">tRNA-2-methylthio-N(6)-dimethylallyladenosine synthase</fullName>
        <ecNumber evidence="1">2.8.4.3</ecNumber>
    </recommendedName>
    <alternativeName>
        <fullName evidence="1">(Dimethylallyl)adenosine tRNA methylthiotransferase MiaB</fullName>
    </alternativeName>
    <alternativeName>
        <fullName evidence="1">tRNA-i(6)A37 methylthiotransferase</fullName>
    </alternativeName>
</protein>
<name>MIAB_CALS8</name>
<proteinExistence type="inferred from homology"/>
<dbReference type="EC" id="2.8.4.3" evidence="1"/>
<dbReference type="EMBL" id="CP000679">
    <property type="protein sequence ID" value="ABP67633.1"/>
    <property type="molecule type" value="Genomic_DNA"/>
</dbReference>
<dbReference type="RefSeq" id="WP_011917568.1">
    <property type="nucleotide sequence ID" value="NC_009437.1"/>
</dbReference>
<dbReference type="SMR" id="A4XL48"/>
<dbReference type="STRING" id="351627.Csac_2048"/>
<dbReference type="KEGG" id="csc:Csac_2048"/>
<dbReference type="eggNOG" id="COG0621">
    <property type="taxonomic scope" value="Bacteria"/>
</dbReference>
<dbReference type="HOGENOM" id="CLU_018697_2_0_9"/>
<dbReference type="OrthoDB" id="9805215at2"/>
<dbReference type="Proteomes" id="UP000000256">
    <property type="component" value="Chromosome"/>
</dbReference>
<dbReference type="GO" id="GO:0005829">
    <property type="term" value="C:cytosol"/>
    <property type="evidence" value="ECO:0007669"/>
    <property type="project" value="TreeGrafter"/>
</dbReference>
<dbReference type="GO" id="GO:0051539">
    <property type="term" value="F:4 iron, 4 sulfur cluster binding"/>
    <property type="evidence" value="ECO:0007669"/>
    <property type="project" value="UniProtKB-UniRule"/>
</dbReference>
<dbReference type="GO" id="GO:0046872">
    <property type="term" value="F:metal ion binding"/>
    <property type="evidence" value="ECO:0007669"/>
    <property type="project" value="UniProtKB-KW"/>
</dbReference>
<dbReference type="GO" id="GO:0035597">
    <property type="term" value="F:N6-isopentenyladenosine methylthiotransferase activity"/>
    <property type="evidence" value="ECO:0007669"/>
    <property type="project" value="TreeGrafter"/>
</dbReference>
<dbReference type="CDD" id="cd01335">
    <property type="entry name" value="Radical_SAM"/>
    <property type="match status" value="1"/>
</dbReference>
<dbReference type="FunFam" id="3.40.50.12160:FF:000006">
    <property type="entry name" value="tRNA-2-methylthio-N(6)-dimethylallyladenosine synthase"/>
    <property type="match status" value="1"/>
</dbReference>
<dbReference type="FunFam" id="3.80.30.20:FF:000001">
    <property type="entry name" value="tRNA-2-methylthio-N(6)-dimethylallyladenosine synthase 2"/>
    <property type="match status" value="1"/>
</dbReference>
<dbReference type="Gene3D" id="3.40.50.12160">
    <property type="entry name" value="Methylthiotransferase, N-terminal domain"/>
    <property type="match status" value="1"/>
</dbReference>
<dbReference type="Gene3D" id="3.80.30.20">
    <property type="entry name" value="tm_1862 like domain"/>
    <property type="match status" value="1"/>
</dbReference>
<dbReference type="HAMAP" id="MF_01864">
    <property type="entry name" value="tRNA_metthiotr_MiaB"/>
    <property type="match status" value="1"/>
</dbReference>
<dbReference type="InterPro" id="IPR006638">
    <property type="entry name" value="Elp3/MiaA/NifB-like_rSAM"/>
</dbReference>
<dbReference type="InterPro" id="IPR005839">
    <property type="entry name" value="Methylthiotransferase"/>
</dbReference>
<dbReference type="InterPro" id="IPR020612">
    <property type="entry name" value="Methylthiotransferase_CS"/>
</dbReference>
<dbReference type="InterPro" id="IPR013848">
    <property type="entry name" value="Methylthiotransferase_N"/>
</dbReference>
<dbReference type="InterPro" id="IPR038135">
    <property type="entry name" value="Methylthiotransferase_N_sf"/>
</dbReference>
<dbReference type="InterPro" id="IPR006463">
    <property type="entry name" value="MiaB_methiolase"/>
</dbReference>
<dbReference type="InterPro" id="IPR007197">
    <property type="entry name" value="rSAM"/>
</dbReference>
<dbReference type="InterPro" id="IPR023404">
    <property type="entry name" value="rSAM_horseshoe"/>
</dbReference>
<dbReference type="InterPro" id="IPR002792">
    <property type="entry name" value="TRAM_dom"/>
</dbReference>
<dbReference type="NCBIfam" id="TIGR01574">
    <property type="entry name" value="miaB-methiolase"/>
    <property type="match status" value="1"/>
</dbReference>
<dbReference type="NCBIfam" id="TIGR00089">
    <property type="entry name" value="MiaB/RimO family radical SAM methylthiotransferase"/>
    <property type="match status" value="1"/>
</dbReference>
<dbReference type="PANTHER" id="PTHR43020">
    <property type="entry name" value="CDK5 REGULATORY SUBUNIT-ASSOCIATED PROTEIN 1"/>
    <property type="match status" value="1"/>
</dbReference>
<dbReference type="PANTHER" id="PTHR43020:SF2">
    <property type="entry name" value="MITOCHONDRIAL TRNA METHYLTHIOTRANSFERASE CDK5RAP1"/>
    <property type="match status" value="1"/>
</dbReference>
<dbReference type="Pfam" id="PF04055">
    <property type="entry name" value="Radical_SAM"/>
    <property type="match status" value="1"/>
</dbReference>
<dbReference type="Pfam" id="PF01938">
    <property type="entry name" value="TRAM"/>
    <property type="match status" value="1"/>
</dbReference>
<dbReference type="Pfam" id="PF00919">
    <property type="entry name" value="UPF0004"/>
    <property type="match status" value="1"/>
</dbReference>
<dbReference type="SFLD" id="SFLDF00273">
    <property type="entry name" value="(dimethylallyl)adenosine_tRNA"/>
    <property type="match status" value="1"/>
</dbReference>
<dbReference type="SFLD" id="SFLDG01082">
    <property type="entry name" value="B12-binding_domain_containing"/>
    <property type="match status" value="1"/>
</dbReference>
<dbReference type="SFLD" id="SFLDG01061">
    <property type="entry name" value="methylthiotransferase"/>
    <property type="match status" value="1"/>
</dbReference>
<dbReference type="SMART" id="SM00729">
    <property type="entry name" value="Elp3"/>
    <property type="match status" value="1"/>
</dbReference>
<dbReference type="SUPFAM" id="SSF102114">
    <property type="entry name" value="Radical SAM enzymes"/>
    <property type="match status" value="1"/>
</dbReference>
<dbReference type="PROSITE" id="PS51449">
    <property type="entry name" value="MTTASE_N"/>
    <property type="match status" value="1"/>
</dbReference>
<dbReference type="PROSITE" id="PS01278">
    <property type="entry name" value="MTTASE_RADICAL"/>
    <property type="match status" value="1"/>
</dbReference>
<dbReference type="PROSITE" id="PS51918">
    <property type="entry name" value="RADICAL_SAM"/>
    <property type="match status" value="1"/>
</dbReference>
<dbReference type="PROSITE" id="PS50926">
    <property type="entry name" value="TRAM"/>
    <property type="match status" value="1"/>
</dbReference>
<sequence>MENRGIYYIDFGTQAQFIEEIEKMNSEYYFKNGKNKTYHIITYGCQMNVHDSEKLAGMLNAMGYVETQNLEEADLIIFNTCAVREHAESRVYGNIGPLKRLKDKKPELIIGVCGCMPQQLEVAQKLAKVFPFLDIIFGTKSLHKFPQLLYKAITTKKTVIDVAEDEDVVVEGIPTARREGVSAFVNIIYGCNNFCSYCIVPYVRGRERSRRPEEIIFEIQQLAANGVKEVTLLGQNVNSYGKDLPDGIPFYKLLEKVNAIEGIERIRFVTSHPKDLSDELIFAMRDLEKVCEHIHLPVQSGSTRILRQMNRHYTKEDYLRLVEKLKENIPDIAITTDIIVGFPGETEEDFEDTLDVVRKVEFDSAYTFIYSKRKGTKAAQMPNQVPDEVKHERFQRLVKLVEEIALKKNQQMLGKVCEILIDGYSKRNNLLEGRTRTNKVVNVKCSDEFMYKFVNVKILEASRHWLYGEVI</sequence>
<feature type="chain" id="PRO_0000374193" description="tRNA-2-methylthio-N(6)-dimethylallyladenosine synthase">
    <location>
        <begin position="1"/>
        <end position="471"/>
    </location>
</feature>
<feature type="domain" description="MTTase N-terminal" evidence="1">
    <location>
        <begin position="36"/>
        <end position="154"/>
    </location>
</feature>
<feature type="domain" description="Radical SAM core" evidence="2">
    <location>
        <begin position="177"/>
        <end position="407"/>
    </location>
</feature>
<feature type="domain" description="TRAM" evidence="1">
    <location>
        <begin position="410"/>
        <end position="471"/>
    </location>
</feature>
<feature type="binding site" evidence="1">
    <location>
        <position position="45"/>
    </location>
    <ligand>
        <name>[4Fe-4S] cluster</name>
        <dbReference type="ChEBI" id="CHEBI:49883"/>
        <label>1</label>
    </ligand>
</feature>
<feature type="binding site" evidence="1">
    <location>
        <position position="81"/>
    </location>
    <ligand>
        <name>[4Fe-4S] cluster</name>
        <dbReference type="ChEBI" id="CHEBI:49883"/>
        <label>1</label>
    </ligand>
</feature>
<feature type="binding site" evidence="1">
    <location>
        <position position="115"/>
    </location>
    <ligand>
        <name>[4Fe-4S] cluster</name>
        <dbReference type="ChEBI" id="CHEBI:49883"/>
        <label>1</label>
    </ligand>
</feature>
<feature type="binding site" evidence="1">
    <location>
        <position position="191"/>
    </location>
    <ligand>
        <name>[4Fe-4S] cluster</name>
        <dbReference type="ChEBI" id="CHEBI:49883"/>
        <label>2</label>
        <note>4Fe-4S-S-AdoMet</note>
    </ligand>
</feature>
<feature type="binding site" evidence="1">
    <location>
        <position position="195"/>
    </location>
    <ligand>
        <name>[4Fe-4S] cluster</name>
        <dbReference type="ChEBI" id="CHEBI:49883"/>
        <label>2</label>
        <note>4Fe-4S-S-AdoMet</note>
    </ligand>
</feature>
<feature type="binding site" evidence="1">
    <location>
        <position position="198"/>
    </location>
    <ligand>
        <name>[4Fe-4S] cluster</name>
        <dbReference type="ChEBI" id="CHEBI:49883"/>
        <label>2</label>
        <note>4Fe-4S-S-AdoMet</note>
    </ligand>
</feature>